<gene>
    <name evidence="22 29" type="primary">DDRGK1</name>
    <name evidence="29" type="synonym">C20orf116</name>
    <name evidence="23" type="synonym">UFBP1</name>
</gene>
<feature type="chain" id="PRO_0000021033" description="DDRGK domain-containing protein 1">
    <location>
        <begin position="1"/>
        <end position="314"/>
    </location>
</feature>
<feature type="transmembrane region" description="Helical" evidence="19">
    <location>
        <begin position="1"/>
        <end position="28"/>
    </location>
</feature>
<feature type="topological domain" description="Cytoplasmic" evidence="27">
    <location>
        <begin position="29"/>
        <end position="314"/>
    </location>
</feature>
<feature type="domain" description="PCI">
    <location>
        <begin position="229"/>
        <end position="273"/>
    </location>
</feature>
<feature type="region of interest" description="Mediates interaction with CDK5RAP3" evidence="6">
    <location>
        <begin position="1"/>
        <end position="114"/>
    </location>
</feature>
<feature type="region of interest" description="Disordered" evidence="2">
    <location>
        <begin position="31"/>
        <end position="75"/>
    </location>
</feature>
<feature type="region of interest" description="Disordered" evidence="2">
    <location>
        <begin position="100"/>
        <end position="186"/>
    </location>
</feature>
<feature type="region of interest" description="Mediates interaction with TRIP4" evidence="8">
    <location>
        <begin position="118"/>
        <end position="216"/>
    </location>
</feature>
<feature type="region of interest" description="Mediates interaction with UFL1" evidence="8">
    <location>
        <begin position="216"/>
        <end position="314"/>
    </location>
</feature>
<feature type="short sequence motif" description="UFM1-interacting motif (UFIM)" evidence="17 19 20">
    <location>
        <begin position="195"/>
        <end position="209"/>
    </location>
</feature>
<feature type="compositionally biased region" description="Basic and acidic residues" evidence="2">
    <location>
        <begin position="124"/>
        <end position="186"/>
    </location>
</feature>
<feature type="modified residue" description="Phosphoserine" evidence="35">
    <location>
        <position position="72"/>
    </location>
</feature>
<feature type="modified residue" description="Phosphoserine" evidence="36">
    <location>
        <position position="114"/>
    </location>
</feature>
<feature type="cross-link" description="Glycyl lysine isopeptide (Lys-Gly) (interchain with G-Cter in UFM1)" evidence="9 25 26">
    <location>
        <position position="267"/>
    </location>
</feature>
<feature type="splice variant" id="VSP_008391" description="In isoform 2." evidence="24">
    <original>DTINRIQDLLAEGTITGVIDDRGKFIYITPEELAAVANFIRQRGRVSIAELAQASN</original>
    <variation>VSPGTWPAVCSVARGLWLAERTCPKDRVLMHRLPCPQPRVSSAQKSPGTLGILHF</variation>
    <location>
        <begin position="244"/>
        <end position="299"/>
    </location>
</feature>
<feature type="sequence variant" id="VAR_016923" description="In dbSNP:rs11591." evidence="3">
    <original>A</original>
    <variation>T</variation>
    <location>
        <position position="303"/>
    </location>
</feature>
<feature type="mutagenesis site" description="Impairs some post-translational modification without affecting interaction with UFL1; when associated with R-146, R-176, R-193, 224-R--R-227 and R-267." evidence="13">
    <original>KIGAKKLRKLEEK</original>
    <variation>RIGARRLRRLEER</variation>
    <location>
        <begin position="116"/>
        <end position="128"/>
    </location>
</feature>
<feature type="mutagenesis site" description="Weak or no effect on ufmylation." evidence="4">
    <original>K</original>
    <variation>R</variation>
    <location>
        <position position="116"/>
    </location>
</feature>
<feature type="mutagenesis site" description="Weak or no effect on ufmylation." evidence="4">
    <original>K</original>
    <variation>R</variation>
    <location>
        <position position="121"/>
    </location>
</feature>
<feature type="mutagenesis site" description="Weak or no effect on ufmylation." evidence="4">
    <original>K</original>
    <variation>R</variation>
    <location>
        <position position="124"/>
    </location>
</feature>
<feature type="mutagenesis site" description="Weak or no effect on ufmylation." evidence="4">
    <original>K</original>
    <variation>R</variation>
    <location>
        <position position="128"/>
    </location>
</feature>
<feature type="mutagenesis site" description="Impairs some post-translational modification without affecting interaction with UFL1; when associated with 116-R--R-128, R-176, R-193, 224-R--R-227 and R-267." evidence="13">
    <original>K</original>
    <variation>R</variation>
    <location>
        <position position="146"/>
    </location>
</feature>
<feature type="mutagenesis site" description="Impairs some post-translational modification without affecting interaction with UFL1; when associated with 116-R--R-128, R-146, R-193, 224-R--R-227 and R-267." evidence="13">
    <original>K</original>
    <variation>R</variation>
    <location>
        <position position="176"/>
    </location>
</feature>
<feature type="mutagenesis site" description="Weak or no effect on ufmylation. Impairs some post-translational modification without affecting interaction with UFL1; when associated with 116-R--R-128, R-146, R-176, 224-R--R-227 and R-267." evidence="4 13">
    <original>K</original>
    <variation>R</variation>
    <location>
        <position position="193"/>
    </location>
</feature>
<feature type="mutagenesis site" description="Abolished ability to recognize and bind ufmylated RPL26/uL24." evidence="19">
    <original>FVVEEE</original>
    <variation>VVAEEP</variation>
    <location>
        <begin position="196"/>
        <end position="201"/>
    </location>
</feature>
<feature type="mutagenesis site" description="Abolished ability to recognize and bind ufmylated RPL26/uL24." evidence="16 17">
    <original>FVV</original>
    <variation>AVA</variation>
    <location>
        <begin position="196"/>
        <end position="198"/>
    </location>
</feature>
<feature type="mutagenesis site" description="Impairs some post-translational modification without affecting interaction with UFL1; when associated with 116-R--R-128, R-146, R-176, R-193 and R-267." evidence="13">
    <original>KQSK</original>
    <variation>RQSR</variation>
    <location>
        <begin position="224"/>
        <end position="227"/>
    </location>
</feature>
<feature type="mutagenesis site" description="Weak or no effect on ufmylation." evidence="4">
    <original>K</original>
    <variation>R</variation>
    <location>
        <position position="224"/>
    </location>
</feature>
<feature type="mutagenesis site" description="Weak or no effect on ufmylation." evidence="4">
    <original>K</original>
    <variation>R</variation>
    <location>
        <position position="227"/>
    </location>
</feature>
<feature type="mutagenesis site" description="Decreased ribosome ufmylation." evidence="20">
    <original>R</original>
    <variation>A</variation>
    <location>
        <position position="265"/>
    </location>
</feature>
<feature type="mutagenesis site" description="Impairs interaction with UFL1 and ufmylation. Impairs interaction with ERN1/IRE1-alpha and ability to regulate its stability. Does not affect ability to promote reticulophagy. Impairs some post-translational modification without affecting interaction with UFL1; when associated with 116-R--R-128, R-146, R-176, R-193, 224-R--R-227 and R-267." evidence="4 8 9 10 13 16">
    <original>K</original>
    <variation>R</variation>
    <location>
        <position position="267"/>
    </location>
</feature>
<feature type="mutagenesis site" description="Abolished interaction with UFL1; when associated with 302-A--A-304." evidence="17">
    <original>ITPEEL</original>
    <variation>ATPEEA</variation>
    <location>
        <begin position="271"/>
        <end position="276"/>
    </location>
</feature>
<feature type="mutagenesis site" description="Abolished interaction with UFL1; when associated with 271-A--A-276." evidence="17">
    <original>IAW</original>
    <variation>AAA</variation>
    <location>
        <begin position="302"/>
        <end position="304"/>
    </location>
</feature>
<feature type="helix" evidence="38">
    <location>
        <begin position="209"/>
        <end position="226"/>
    </location>
</feature>
<feature type="strand" evidence="38">
    <location>
        <begin position="227"/>
        <end position="230"/>
    </location>
</feature>
<feature type="helix" evidence="38">
    <location>
        <begin position="231"/>
        <end position="238"/>
    </location>
</feature>
<feature type="helix" evidence="38">
    <location>
        <begin position="242"/>
        <end position="254"/>
    </location>
</feature>
<feature type="strand" evidence="37">
    <location>
        <begin position="260"/>
        <end position="262"/>
    </location>
</feature>
<feature type="strand" evidence="38">
    <location>
        <begin position="266"/>
        <end position="269"/>
    </location>
</feature>
<feature type="helix" evidence="38">
    <location>
        <begin position="273"/>
        <end position="286"/>
    </location>
</feature>
<feature type="strand" evidence="38">
    <location>
        <begin position="287"/>
        <end position="290"/>
    </location>
</feature>
<feature type="helix" evidence="38">
    <location>
        <begin position="291"/>
        <end position="301"/>
    </location>
</feature>
<comment type="function">
    <text evidence="1 7 8 10 11 12 13 14 15 16 17 18 19 20">Component of the UFM1 ribosome E3 ligase (UREL) complex, a multiprotein complex that catalyzes ufmylation of endoplasmic reticulum-docked proteins (PubMed:30626644, PubMed:32160526, PubMed:35753586, PubMed:36121123, PubMed:36543799, PubMed:37595036, PubMed:37795761, PubMed:38383785, PubMed:38383789). The UREL complex plays a key role in ribosome recycling by mediating mono-ufmylation of the RPL26/uL24 subunit of the 60S ribosome following ribosome dissociation: ufmylation weakens the junction between post-termination 60S subunits and SEC61 translocons, promoting release and recycling of the large ribosomal subunit from the endoplasmic reticulum membrane (PubMed:38383785, PubMed:38383789). Ufmylation of RPL26/uL24 and subsequent 60S ribosome recycling either take place after normal termination of translation or after ribosome stalling during cotranslational translocation at the endoplasmic reticulum (PubMed:37595036, PubMed:38383785, PubMed:38383789). Within the UREL complex, DDRGK1 tethers the complex to the endoplasmic reticulum membrane to restrict its activity to endoplasmic reticulum-docked ribosomes and acts as an ufmylation 'reader': following RPL26/uL24 ufmylation, DDRGK1 specifically binds to ufmylated RPL26/uL24 via its UFIM motif, resulting in stable association between the 60S ribosome and the UREL complex, followed by dissociation of the 60S ribosome subunit from the endoplasmic reticulum membrane (PubMed:36121123, PubMed:37595036, PubMed:38383785, PubMed:38383789). The UREL complex is also involved in reticulophagy in response to endoplasmic reticulum stress by promoting ufmylation of proteins such as CYB5R3 and RPN1, thereby promoting lysosomal degradation of ufmylated proteins (PubMed:32160526, PubMed:36543799). Ufmylation-dependent reticulophagy inhibits the unfolded protein response (UPR) by regulating ERN1/IRE1-alpha stability (PubMed:28128204, PubMed:32160526). Acts as a regulator of immunity by promoting differentiation of B-cells into plasma cells: acts by promoting expansion of the endoplasmic reticulum and regulating the unfolded protein response (UPR) (By similarity). May also be required for TRIP4 ufmylation (PubMed:25219498). May play a role in NF-kappa-B-mediated transcription through regulation of the phosphorylation and the degradation of NFKBIA, the inhibitor of NF-kappa-B (PubMed:23675531). Plays a role in cartilage development through SOX9, inhibiting the ubiquitin-mediated proteasomal degradation of this transcriptional regulator (PubMed:28263186). Required for stabilization and ufmylation of ATG9A (By similarity).</text>
</comment>
<comment type="subunit">
    <text evidence="6 7 8 10 11 13 15 16 17 19 20">Component of the UFM1 ribosome E3 ligase (UREL) complex, composed of UFL1, DDRGK1 and CDK5RAP3 (PubMed:20228063, PubMed:25219498, PubMed:32160526, PubMed:36121123, PubMed:36543799, PubMed:37595036, PubMed:38383785, PubMed:38383789). Interacts with (unphosphorylated) ERN1/IRE1-alpha; interaction is dependent on UFM1 and takes place in response to endoplasmic reticulum stress, regulating ERN1/IRE1-alpha stability (PubMed:28128204). Interacts with NFKBIA (PubMed:23675531). Interacts with SOX9 (PubMed:28263186).</text>
</comment>
<comment type="interaction">
    <interactant intactId="EBI-1054024">
        <id>Q96HY6</id>
    </interactant>
    <interactant intactId="EBI-349854">
        <id>P13569</id>
        <label>CFTR</label>
    </interactant>
    <organismsDiffer>false</organismsDiffer>
    <experiments>4</experiments>
</comment>
<comment type="interaction">
    <interactant intactId="EBI-1054024">
        <id>Q96HY6</id>
    </interactant>
    <interactant intactId="EBI-1048088">
        <id>O94874</id>
        <label>UFL1</label>
    </interactant>
    <organismsDiffer>false</organismsDiffer>
    <experiments>9</experiments>
</comment>
<comment type="subcellular location">
    <subcellularLocation>
        <location evidence="4 13 16 19 20">Endoplasmic reticulum membrane</location>
        <topology evidence="27 28">Single-pass membrane protein</topology>
    </subcellularLocation>
</comment>
<comment type="alternative products">
    <event type="alternative splicing"/>
    <isoform>
        <id>Q96HY6-1</id>
        <name>1</name>
        <sequence type="displayed"/>
    </isoform>
    <isoform>
        <id>Q96HY6-2</id>
        <name>2</name>
        <sequence type="described" ref="VSP_008391"/>
    </isoform>
</comment>
<comment type="tissue specificity">
    <text evidence="4 5">Widely expressed (at protein level). In the brain, highest levels in medulla oblongata, followed by cerebral cortex, cerebellum and frontal lobe.</text>
</comment>
<comment type="domain">
    <text evidence="16 17 19 20">The UFM1-interacting motif (UFIM) specifically recognizes and binds ufmylated RPL26/uL24, resulting in stable association between the 60S ribosome and the UREL complex.</text>
</comment>
<comment type="PTM">
    <text evidence="6">Ubiquitinated. Ubiquitination probably triggers proteasomal degradation and is negatively regulated by UFL1, the enzyme involved in the ufmylation of DDRGK1.</text>
</comment>
<comment type="PTM">
    <text evidence="4 9 10 13">Ufmylated; conjugated to ubiquitin-like protein UFM1, probably at Lys-267 by UFL1 (PubMed:20018847, PubMed:27926783, PubMed:28128204). The relevance of ufmylation is however unclear: as DDRGK1 acts as a substrate adapters for ufmylation, it is uncertain whether ufmylation is a collateral effect of ufmylation process or is required to regulate its activity (PubMed:32160526).</text>
</comment>
<comment type="disease" evidence="11">
    <disease id="DI-05181">
        <name>Spondyloepimetaphyseal dysplasia, Shohat type</name>
        <acronym>SEMDSH</acronym>
        <description>An autosomal recessive skeletal dysplasia that affects cartilage development. It is characterized by vertebral, epiphyseal, and metaphyseal abnormalities, including scoliosis with vertebral compression fractures, flattened vertebral bodies, and hypomineralization of long bones. Affected individuals may exhibit a small trunk, short neck, small limbs, joint laxity, bowlegs, and/or abdominal distension with hepatosplenomegaly.</description>
        <dbReference type="MIM" id="602557"/>
    </disease>
    <text>The disease is caused by variants affecting the gene represented in this entry.</text>
</comment>
<comment type="similarity">
    <text evidence="24">Belongs to the DDRGK1 family.</text>
</comment>
<sequence>MVAPVWYLVAAALLVGFILFLTRSRGRAASAGQEPLHNEELAGAGRVAQPGPLEPEEPRAGGRPRRRRDLGSRLQAQRRAQRVAWAEADENEEEAVILAQEEEGVEKPAETHLSGKIGAKKLRKLEEKQARKAQREAEEAEREERKRLESQREAEWKKEEERLRLEEEQKEEEERKAREEQAQREHEEYLKLKEAFVVEEEGVGETMTEEQSQSFLTEFINYIKQSKVVLLEDLASQVGLRTQDTINRIQDLLAEGTITGVIDDRGKFIYITPEELAAVANFIRQRGRVSIAELAQASNSLIAWGRESPAQAPA</sequence>
<accession>Q96HY6</accession>
<accession>A6NIU5</accession>
<accession>C9JSZ5</accession>
<accession>Q9BW47</accession>
<proteinExistence type="evidence at protein level"/>
<dbReference type="EMBL" id="AL121891">
    <property type="status" value="NOT_ANNOTATED_CDS"/>
    <property type="molecule type" value="Genomic_DNA"/>
</dbReference>
<dbReference type="EMBL" id="CH471133">
    <property type="protein sequence ID" value="EAX10544.1"/>
    <property type="molecule type" value="Genomic_DNA"/>
</dbReference>
<dbReference type="EMBL" id="BC000643">
    <property type="protein sequence ID" value="AAH00643.1"/>
    <property type="molecule type" value="mRNA"/>
</dbReference>
<dbReference type="EMBL" id="BC007957">
    <property type="protein sequence ID" value="AAH07957.1"/>
    <property type="molecule type" value="mRNA"/>
</dbReference>
<dbReference type="EMBL" id="BC011851">
    <property type="protein sequence ID" value="AAH11851.1"/>
    <property type="molecule type" value="mRNA"/>
</dbReference>
<dbReference type="CCDS" id="CCDS13050.1">
    <molecule id="Q96HY6-1"/>
</dbReference>
<dbReference type="RefSeq" id="NP_076424.1">
    <molecule id="Q96HY6-1"/>
    <property type="nucleotide sequence ID" value="NM_023935.3"/>
</dbReference>
<dbReference type="PDB" id="7W3N">
    <property type="method" value="X-ray"/>
    <property type="resolution" value="1.60 A"/>
    <property type="chains" value="A=194-202"/>
</dbReference>
<dbReference type="PDB" id="8B9X">
    <property type="method" value="X-ray"/>
    <property type="resolution" value="3.07 A"/>
    <property type="chains" value="A/B=207-305"/>
</dbReference>
<dbReference type="PDB" id="8C0D">
    <property type="method" value="X-ray"/>
    <property type="resolution" value="2.56 A"/>
    <property type="chains" value="B/E=205-314"/>
</dbReference>
<dbReference type="PDB" id="8OHD">
    <property type="method" value="EM"/>
    <property type="resolution" value="3.10 A"/>
    <property type="chains" value="C=1-314"/>
</dbReference>
<dbReference type="PDB" id="8OJ0">
    <property type="method" value="EM"/>
    <property type="resolution" value="3.30 A"/>
    <property type="chains" value="C=1-314"/>
</dbReference>
<dbReference type="PDB" id="8OJ5">
    <property type="method" value="EM"/>
    <property type="resolution" value="2.90 A"/>
    <property type="chains" value="C=1-314"/>
</dbReference>
<dbReference type="PDBsum" id="7W3N"/>
<dbReference type="PDBsum" id="8B9X"/>
<dbReference type="PDBsum" id="8C0D"/>
<dbReference type="PDBsum" id="8OHD"/>
<dbReference type="PDBsum" id="8OJ0"/>
<dbReference type="PDBsum" id="8OJ5"/>
<dbReference type="EMDB" id="EMD-16880"/>
<dbReference type="EMDB" id="EMD-16902"/>
<dbReference type="EMDB" id="EMD-16905"/>
<dbReference type="EMDB" id="EMD-18381"/>
<dbReference type="SMR" id="Q96HY6"/>
<dbReference type="BioGRID" id="122441">
    <property type="interactions" value="1285"/>
</dbReference>
<dbReference type="ComplexPortal" id="CPX-8304">
    <property type="entry name" value="UFM1 ribosome E3 ligase complex"/>
</dbReference>
<dbReference type="FunCoup" id="Q96HY6">
    <property type="interactions" value="1151"/>
</dbReference>
<dbReference type="IntAct" id="Q96HY6">
    <property type="interactions" value="61"/>
</dbReference>
<dbReference type="MINT" id="Q96HY6"/>
<dbReference type="STRING" id="9606.ENSP00000346483"/>
<dbReference type="iPTMnet" id="Q96HY6"/>
<dbReference type="PhosphoSitePlus" id="Q96HY6"/>
<dbReference type="SwissPalm" id="Q96HY6"/>
<dbReference type="BioMuta" id="DDRGK1"/>
<dbReference type="DMDM" id="37077728"/>
<dbReference type="jPOST" id="Q96HY6"/>
<dbReference type="MassIVE" id="Q96HY6"/>
<dbReference type="PaxDb" id="9606-ENSP00000346483"/>
<dbReference type="PeptideAtlas" id="Q96HY6"/>
<dbReference type="ProteomicsDB" id="76794">
    <molecule id="Q96HY6-1"/>
</dbReference>
<dbReference type="ProteomicsDB" id="76795">
    <molecule id="Q96HY6-2"/>
</dbReference>
<dbReference type="Pumba" id="Q96HY6"/>
<dbReference type="Antibodypedia" id="2721">
    <property type="antibodies" value="73 antibodies from 18 providers"/>
</dbReference>
<dbReference type="DNASU" id="65992"/>
<dbReference type="Ensembl" id="ENST00000354488.8">
    <molecule id="Q96HY6-1"/>
    <property type="protein sequence ID" value="ENSP00000346483.3"/>
    <property type="gene ID" value="ENSG00000198171.13"/>
</dbReference>
<dbReference type="GeneID" id="65992"/>
<dbReference type="KEGG" id="hsa:65992"/>
<dbReference type="MANE-Select" id="ENST00000354488.8">
    <property type="protein sequence ID" value="ENSP00000346483.3"/>
    <property type="RefSeq nucleotide sequence ID" value="NM_023935.3"/>
    <property type="RefSeq protein sequence ID" value="NP_076424.1"/>
</dbReference>
<dbReference type="UCSC" id="uc002wic.4">
    <molecule id="Q96HY6-1"/>
    <property type="organism name" value="human"/>
</dbReference>
<dbReference type="AGR" id="HGNC:16110"/>
<dbReference type="CTD" id="65992"/>
<dbReference type="DisGeNET" id="65992"/>
<dbReference type="GeneCards" id="DDRGK1"/>
<dbReference type="HGNC" id="HGNC:16110">
    <property type="gene designation" value="DDRGK1"/>
</dbReference>
<dbReference type="HPA" id="ENSG00000198171">
    <property type="expression patterns" value="Low tissue specificity"/>
</dbReference>
<dbReference type="MalaCards" id="DDRGK1"/>
<dbReference type="MIM" id="602557">
    <property type="type" value="phenotype"/>
</dbReference>
<dbReference type="MIM" id="616177">
    <property type="type" value="gene"/>
</dbReference>
<dbReference type="neXtProt" id="NX_Q96HY6"/>
<dbReference type="OpenTargets" id="ENSG00000198171"/>
<dbReference type="Orphanet" id="93352">
    <property type="disease" value="Spondyloepimetaphyseal dysplasia, Shohat type"/>
</dbReference>
<dbReference type="PharmGKB" id="PA164718734"/>
<dbReference type="VEuPathDB" id="HostDB:ENSG00000198171"/>
<dbReference type="eggNOG" id="KOG3054">
    <property type="taxonomic scope" value="Eukaryota"/>
</dbReference>
<dbReference type="GeneTree" id="ENSGT00390000017193"/>
<dbReference type="HOGENOM" id="CLU_059562_0_0_1"/>
<dbReference type="InParanoid" id="Q96HY6"/>
<dbReference type="OMA" id="EFTRECN"/>
<dbReference type="OrthoDB" id="2285710at2759"/>
<dbReference type="PAN-GO" id="Q96HY6">
    <property type="GO annotations" value="3 GO annotations based on evolutionary models"/>
</dbReference>
<dbReference type="PhylomeDB" id="Q96HY6"/>
<dbReference type="TreeFam" id="TF314645"/>
<dbReference type="PathwayCommons" id="Q96HY6"/>
<dbReference type="Reactome" id="R-HSA-8980692">
    <property type="pathway name" value="RHOA GTPase cycle"/>
</dbReference>
<dbReference type="SignaLink" id="Q96HY6"/>
<dbReference type="BioGRID-ORCS" id="65992">
    <property type="hits" value="90 hits in 1164 CRISPR screens"/>
</dbReference>
<dbReference type="CD-CODE" id="FB4E32DD">
    <property type="entry name" value="Presynaptic clusters and postsynaptic densities"/>
</dbReference>
<dbReference type="ChiTaRS" id="DDRGK1">
    <property type="organism name" value="human"/>
</dbReference>
<dbReference type="GenomeRNAi" id="65992"/>
<dbReference type="Pharos" id="Q96HY6">
    <property type="development level" value="Tbio"/>
</dbReference>
<dbReference type="PRO" id="PR:Q96HY6"/>
<dbReference type="Proteomes" id="UP000005640">
    <property type="component" value="Chromosome 20"/>
</dbReference>
<dbReference type="RNAct" id="Q96HY6">
    <property type="molecule type" value="protein"/>
</dbReference>
<dbReference type="Bgee" id="ENSG00000198171">
    <property type="expression patterns" value="Expressed in tendon of biceps brachii and 194 other cell types or tissues"/>
</dbReference>
<dbReference type="ExpressionAtlas" id="Q96HY6">
    <property type="expression patterns" value="baseline and differential"/>
</dbReference>
<dbReference type="GO" id="GO:0005737">
    <property type="term" value="C:cytoplasm"/>
    <property type="evidence" value="ECO:0000304"/>
    <property type="project" value="ParkinsonsUK-UCL"/>
</dbReference>
<dbReference type="GO" id="GO:0005783">
    <property type="term" value="C:endoplasmic reticulum"/>
    <property type="evidence" value="ECO:0000314"/>
    <property type="project" value="HPA"/>
</dbReference>
<dbReference type="GO" id="GO:0005789">
    <property type="term" value="C:endoplasmic reticulum membrane"/>
    <property type="evidence" value="ECO:0000314"/>
    <property type="project" value="UniProtKB"/>
</dbReference>
<dbReference type="GO" id="GO:0005730">
    <property type="term" value="C:nucleolus"/>
    <property type="evidence" value="ECO:0000314"/>
    <property type="project" value="HPA"/>
</dbReference>
<dbReference type="GO" id="GO:0044389">
    <property type="term" value="F:ubiquitin-like protein ligase binding"/>
    <property type="evidence" value="ECO:0000353"/>
    <property type="project" value="UniProtKB"/>
</dbReference>
<dbReference type="GO" id="GO:0141185">
    <property type="term" value="F:UFM1-modified protein reader activity"/>
    <property type="evidence" value="ECO:0000314"/>
    <property type="project" value="UniProtKB"/>
</dbReference>
<dbReference type="GO" id="GO:0051216">
    <property type="term" value="P:cartilage development"/>
    <property type="evidence" value="ECO:0000315"/>
    <property type="project" value="UniProtKB"/>
</dbReference>
<dbReference type="GO" id="GO:0043066">
    <property type="term" value="P:negative regulation of apoptotic process"/>
    <property type="evidence" value="ECO:0000250"/>
    <property type="project" value="ParkinsonsUK-UCL"/>
</dbReference>
<dbReference type="GO" id="GO:0010629">
    <property type="term" value="P:negative regulation of gene expression"/>
    <property type="evidence" value="ECO:0000315"/>
    <property type="project" value="ParkinsonsUK-UCL"/>
</dbReference>
<dbReference type="GO" id="GO:1903895">
    <property type="term" value="P:negative regulation of IRE1-mediated unfolded protein response"/>
    <property type="evidence" value="ECO:0000314"/>
    <property type="project" value="UniProtKB"/>
</dbReference>
<dbReference type="GO" id="GO:1903898">
    <property type="term" value="P:negative regulation of PERK-mediated unfolded protein response"/>
    <property type="evidence" value="ECO:0000250"/>
    <property type="project" value="UniProtKB"/>
</dbReference>
<dbReference type="GO" id="GO:0032435">
    <property type="term" value="P:negative regulation of proteasomal ubiquitin-dependent protein catabolic process"/>
    <property type="evidence" value="ECO:0000315"/>
    <property type="project" value="UniProtKB"/>
</dbReference>
<dbReference type="GO" id="GO:0043123">
    <property type="term" value="P:positive regulation of canonical NF-kappaB signal transduction"/>
    <property type="evidence" value="ECO:0000315"/>
    <property type="project" value="ParkinsonsUK-UCL"/>
</dbReference>
<dbReference type="GO" id="GO:1902808">
    <property type="term" value="P:positive regulation of cell cycle G1/S phase transition"/>
    <property type="evidence" value="ECO:0000305"/>
    <property type="project" value="ParkinsonsUK-UCL"/>
</dbReference>
<dbReference type="GO" id="GO:0030335">
    <property type="term" value="P:positive regulation of cell migration"/>
    <property type="evidence" value="ECO:0000315"/>
    <property type="project" value="ParkinsonsUK-UCL"/>
</dbReference>
<dbReference type="GO" id="GO:0008284">
    <property type="term" value="P:positive regulation of cell population proliferation"/>
    <property type="evidence" value="ECO:0000315"/>
    <property type="project" value="ParkinsonsUK-UCL"/>
</dbReference>
<dbReference type="GO" id="GO:0010628">
    <property type="term" value="P:positive regulation of gene expression"/>
    <property type="evidence" value="ECO:0000315"/>
    <property type="project" value="ParkinsonsUK-UCL"/>
</dbReference>
<dbReference type="GO" id="GO:1903721">
    <property type="term" value="P:positive regulation of I-kappaB phosphorylation"/>
    <property type="evidence" value="ECO:0000315"/>
    <property type="project" value="UniProtKB"/>
</dbReference>
<dbReference type="GO" id="GO:0051092">
    <property type="term" value="P:positive regulation of NF-kappaB transcription factor activity"/>
    <property type="evidence" value="ECO:0000315"/>
    <property type="project" value="UniProtKB"/>
</dbReference>
<dbReference type="GO" id="GO:1900100">
    <property type="term" value="P:positive regulation of plasma cell differentiation"/>
    <property type="evidence" value="ECO:0000250"/>
    <property type="project" value="UniProtKB"/>
</dbReference>
<dbReference type="GO" id="GO:1901800">
    <property type="term" value="P:positive regulation of proteasomal protein catabolic process"/>
    <property type="evidence" value="ECO:0000315"/>
    <property type="project" value="UniProtKB"/>
</dbReference>
<dbReference type="GO" id="GO:0032436">
    <property type="term" value="P:positive regulation of proteasomal ubiquitin-dependent protein catabolic process"/>
    <property type="evidence" value="ECO:0000315"/>
    <property type="project" value="ParkinsonsUK-UCL"/>
</dbReference>
<dbReference type="GO" id="GO:1905552">
    <property type="term" value="P:positive regulation of protein localization to endoplasmic reticulum"/>
    <property type="evidence" value="ECO:0000250"/>
    <property type="project" value="ParkinsonsUK-UCL"/>
</dbReference>
<dbReference type="GO" id="GO:1903052">
    <property type="term" value="P:positive regulation of proteolysis involved in protein catabolic process"/>
    <property type="evidence" value="ECO:0000314"/>
    <property type="project" value="UniProt"/>
</dbReference>
<dbReference type="GO" id="GO:0140501">
    <property type="term" value="P:positive regulation of reticulophagy"/>
    <property type="evidence" value="ECO:0000314"/>
    <property type="project" value="UniProtKB"/>
</dbReference>
<dbReference type="GO" id="GO:0045944">
    <property type="term" value="P:positive regulation of transcription by RNA polymerase II"/>
    <property type="evidence" value="ECO:0000315"/>
    <property type="project" value="ParkinsonsUK-UCL"/>
</dbReference>
<dbReference type="GO" id="GO:1990592">
    <property type="term" value="P:protein K69-linked ufmylation"/>
    <property type="evidence" value="ECO:0000314"/>
    <property type="project" value="UniProtKB"/>
</dbReference>
<dbReference type="GO" id="GO:0070972">
    <property type="term" value="P:protein localization to endoplasmic reticulum"/>
    <property type="evidence" value="ECO:0000314"/>
    <property type="project" value="UniProtKB"/>
</dbReference>
<dbReference type="GO" id="GO:0071569">
    <property type="term" value="P:protein ufmylation"/>
    <property type="evidence" value="ECO:0000314"/>
    <property type="project" value="UniProtKB"/>
</dbReference>
<dbReference type="GO" id="GO:0033146">
    <property type="term" value="P:regulation of intracellular estrogen receptor signaling pathway"/>
    <property type="evidence" value="ECO:0000314"/>
    <property type="project" value="UniProtKB"/>
</dbReference>
<dbReference type="GO" id="GO:0031647">
    <property type="term" value="P:regulation of protein stability"/>
    <property type="evidence" value="ECO:0000314"/>
    <property type="project" value="UniProtKB"/>
</dbReference>
<dbReference type="GO" id="GO:0072344">
    <property type="term" value="P:rescue of stalled ribosome"/>
    <property type="evidence" value="ECO:0000314"/>
    <property type="project" value="UniProtKB"/>
</dbReference>
<dbReference type="GO" id="GO:0034976">
    <property type="term" value="P:response to endoplasmic reticulum stress"/>
    <property type="evidence" value="ECO:0000314"/>
    <property type="project" value="UniProtKB"/>
</dbReference>
<dbReference type="GO" id="GO:0061709">
    <property type="term" value="P:reticulophagy"/>
    <property type="evidence" value="ECO:0000314"/>
    <property type="project" value="UniProtKB"/>
</dbReference>
<dbReference type="GO" id="GO:0032790">
    <property type="term" value="P:ribosome disassembly"/>
    <property type="evidence" value="ECO:0000314"/>
    <property type="project" value="UniProtKB"/>
</dbReference>
<dbReference type="FunFam" id="1.10.10.10:FF:000143">
    <property type="entry name" value="DDRGK domain-containing protein 1"/>
    <property type="match status" value="1"/>
</dbReference>
<dbReference type="Gene3D" id="1.10.10.10">
    <property type="entry name" value="Winged helix-like DNA-binding domain superfamily/Winged helix DNA-binding domain"/>
    <property type="match status" value="1"/>
</dbReference>
<dbReference type="InterPro" id="IPR019153">
    <property type="entry name" value="DDRGK_dom-contain"/>
</dbReference>
<dbReference type="InterPro" id="IPR050899">
    <property type="entry name" value="DDRGK_domain-containing"/>
</dbReference>
<dbReference type="InterPro" id="IPR036388">
    <property type="entry name" value="WH-like_DNA-bd_sf"/>
</dbReference>
<dbReference type="InterPro" id="IPR036390">
    <property type="entry name" value="WH_DNA-bd_sf"/>
</dbReference>
<dbReference type="PANTHER" id="PTHR48176">
    <property type="entry name" value="DDRGK DOMAIN-CONTAINING PROTEIN 1"/>
    <property type="match status" value="1"/>
</dbReference>
<dbReference type="PANTHER" id="PTHR48176:SF1">
    <property type="entry name" value="DDRGK DOMAIN-CONTAINING PROTEIN 1"/>
    <property type="match status" value="1"/>
</dbReference>
<dbReference type="Pfam" id="PF09756">
    <property type="entry name" value="DDRGK"/>
    <property type="match status" value="1"/>
</dbReference>
<dbReference type="SMART" id="SM01128">
    <property type="entry name" value="DDRGK"/>
    <property type="match status" value="1"/>
</dbReference>
<dbReference type="SUPFAM" id="SSF46785">
    <property type="entry name" value="Winged helix' DNA-binding domain"/>
    <property type="match status" value="1"/>
</dbReference>
<protein>
    <recommendedName>
        <fullName evidence="24">DDRGK domain-containing protein 1</fullName>
    </recommendedName>
    <alternativeName>
        <fullName evidence="21">Dashurin</fullName>
    </alternativeName>
    <alternativeName>
        <fullName evidence="23">UFM1-binding and PCI domain-containing protein 1</fullName>
    </alternativeName>
</protein>
<evidence type="ECO:0000250" key="1">
    <source>
        <dbReference type="UniProtKB" id="Q80WW9"/>
    </source>
</evidence>
<evidence type="ECO:0000256" key="2">
    <source>
        <dbReference type="SAM" id="MobiDB-lite"/>
    </source>
</evidence>
<evidence type="ECO:0000269" key="3">
    <source>
    </source>
</evidence>
<evidence type="ECO:0000269" key="4">
    <source>
    </source>
</evidence>
<evidence type="ECO:0000269" key="5">
    <source>
    </source>
</evidence>
<evidence type="ECO:0000269" key="6">
    <source>
    </source>
</evidence>
<evidence type="ECO:0000269" key="7">
    <source>
    </source>
</evidence>
<evidence type="ECO:0000269" key="8">
    <source>
    </source>
</evidence>
<evidence type="ECO:0000269" key="9">
    <source>
    </source>
</evidence>
<evidence type="ECO:0000269" key="10">
    <source>
    </source>
</evidence>
<evidence type="ECO:0000269" key="11">
    <source>
    </source>
</evidence>
<evidence type="ECO:0000269" key="12">
    <source>
    </source>
</evidence>
<evidence type="ECO:0000269" key="13">
    <source>
    </source>
</evidence>
<evidence type="ECO:0000269" key="14">
    <source>
    </source>
</evidence>
<evidence type="ECO:0000269" key="15">
    <source>
    </source>
</evidence>
<evidence type="ECO:0000269" key="16">
    <source>
    </source>
</evidence>
<evidence type="ECO:0000269" key="17">
    <source>
    </source>
</evidence>
<evidence type="ECO:0000269" key="18">
    <source>
    </source>
</evidence>
<evidence type="ECO:0000269" key="19">
    <source>
    </source>
</evidence>
<evidence type="ECO:0000269" key="20">
    <source>
    </source>
</evidence>
<evidence type="ECO:0000303" key="21">
    <source>
    </source>
</evidence>
<evidence type="ECO:0000303" key="22">
    <source>
    </source>
</evidence>
<evidence type="ECO:0000303" key="23">
    <source>
    </source>
</evidence>
<evidence type="ECO:0000305" key="24"/>
<evidence type="ECO:0000305" key="25">
    <source>
    </source>
</evidence>
<evidence type="ECO:0000305" key="26">
    <source>
    </source>
</evidence>
<evidence type="ECO:0000305" key="27">
    <source>
    </source>
</evidence>
<evidence type="ECO:0000305" key="28">
    <source>
    </source>
</evidence>
<evidence type="ECO:0000312" key="29">
    <source>
        <dbReference type="HGNC" id="HGNC:16110"/>
    </source>
</evidence>
<evidence type="ECO:0007744" key="30">
    <source>
        <dbReference type="PDB" id="8B9X"/>
    </source>
</evidence>
<evidence type="ECO:0007744" key="31">
    <source>
        <dbReference type="PDB" id="8C0D"/>
    </source>
</evidence>
<evidence type="ECO:0007744" key="32">
    <source>
        <dbReference type="PDB" id="8OHD"/>
    </source>
</evidence>
<evidence type="ECO:0007744" key="33">
    <source>
        <dbReference type="PDB" id="8OJ0"/>
    </source>
</evidence>
<evidence type="ECO:0007744" key="34">
    <source>
        <dbReference type="PDB" id="8OJ5"/>
    </source>
</evidence>
<evidence type="ECO:0007744" key="35">
    <source>
    </source>
</evidence>
<evidence type="ECO:0007744" key="36">
    <source>
    </source>
</evidence>
<evidence type="ECO:0007829" key="37">
    <source>
        <dbReference type="PDB" id="8B9X"/>
    </source>
</evidence>
<evidence type="ECO:0007829" key="38">
    <source>
        <dbReference type="PDB" id="8C0D"/>
    </source>
</evidence>
<organism>
    <name type="scientific">Homo sapiens</name>
    <name type="common">Human</name>
    <dbReference type="NCBI Taxonomy" id="9606"/>
    <lineage>
        <taxon>Eukaryota</taxon>
        <taxon>Metazoa</taxon>
        <taxon>Chordata</taxon>
        <taxon>Craniata</taxon>
        <taxon>Vertebrata</taxon>
        <taxon>Euteleostomi</taxon>
        <taxon>Mammalia</taxon>
        <taxon>Eutheria</taxon>
        <taxon>Euarchontoglires</taxon>
        <taxon>Primates</taxon>
        <taxon>Haplorrhini</taxon>
        <taxon>Catarrhini</taxon>
        <taxon>Hominidae</taxon>
        <taxon>Homo</taxon>
    </lineage>
</organism>
<name>DDRGK_HUMAN</name>
<keyword id="KW-0002">3D-structure</keyword>
<keyword id="KW-0025">Alternative splicing</keyword>
<keyword id="KW-0242">Dwarfism</keyword>
<keyword id="KW-0256">Endoplasmic reticulum</keyword>
<keyword id="KW-1017">Isopeptide bond</keyword>
<keyword id="KW-0472">Membrane</keyword>
<keyword id="KW-0597">Phosphoprotein</keyword>
<keyword id="KW-1267">Proteomics identification</keyword>
<keyword id="KW-1185">Reference proteome</keyword>
<keyword id="KW-0812">Transmembrane</keyword>
<keyword id="KW-1133">Transmembrane helix</keyword>
<keyword id="KW-0832">Ubl conjugation</keyword>
<keyword id="KW-0833">Ubl conjugation pathway</keyword>
<reference key="1">
    <citation type="journal article" date="2010" name="Biochim. Biophys. Acta">
        <title>Cloning and molecular characterization of Dashurin encoded by C20orf116, a PCI-domain containing protein.</title>
        <authorList>
            <person name="Neziri D."/>
            <person name="Ilhan A."/>
            <person name="Maj M."/>
            <person name="Majdic O."/>
            <person name="Baumgartner-Parzer S."/>
            <person name="Cohen G."/>
            <person name="Base W."/>
            <person name="Wagner L."/>
        </authorList>
    </citation>
    <scope>NUCLEOTIDE SEQUENCE [MRNA] (ISOFORM 1)</scope>
    <scope>TISSUE SPECIFICITY</scope>
    <source>
        <tissue>Liver</tissue>
    </source>
</reference>
<reference key="2">
    <citation type="journal article" date="2003" name="Genome Res.">
        <title>The secreted protein discovery initiative (SPDI), a large-scale effort to identify novel human secreted and transmembrane proteins: a bioinformatics assessment.</title>
        <authorList>
            <person name="Clark H.F."/>
            <person name="Gurney A.L."/>
            <person name="Abaya E."/>
            <person name="Baker K."/>
            <person name="Baldwin D.T."/>
            <person name="Brush J."/>
            <person name="Chen J."/>
            <person name="Chow B."/>
            <person name="Chui C."/>
            <person name="Crowley C."/>
            <person name="Currell B."/>
            <person name="Deuel B."/>
            <person name="Dowd P."/>
            <person name="Eaton D."/>
            <person name="Foster J.S."/>
            <person name="Grimaldi C."/>
            <person name="Gu Q."/>
            <person name="Hass P.E."/>
            <person name="Heldens S."/>
            <person name="Huang A."/>
            <person name="Kim H.S."/>
            <person name="Klimowski L."/>
            <person name="Jin Y."/>
            <person name="Johnson S."/>
            <person name="Lee J."/>
            <person name="Lewis L."/>
            <person name="Liao D."/>
            <person name="Mark M.R."/>
            <person name="Robbie E."/>
            <person name="Sanchez C."/>
            <person name="Schoenfeld J."/>
            <person name="Seshagiri S."/>
            <person name="Simmons L."/>
            <person name="Singh J."/>
            <person name="Smith V."/>
            <person name="Stinson J."/>
            <person name="Vagts A."/>
            <person name="Vandlen R.L."/>
            <person name="Watanabe C."/>
            <person name="Wieand D."/>
            <person name="Woods K."/>
            <person name="Xie M.-H."/>
            <person name="Yansura D.G."/>
            <person name="Yi S."/>
            <person name="Yu G."/>
            <person name="Yuan J."/>
            <person name="Zhang M."/>
            <person name="Zhang Z."/>
            <person name="Goddard A.D."/>
            <person name="Wood W.I."/>
            <person name="Godowski P.J."/>
            <person name="Gray A.M."/>
        </authorList>
    </citation>
    <scope>NUCLEOTIDE SEQUENCE [LARGE SCALE MRNA]</scope>
</reference>
<reference key="3">
    <citation type="journal article" date="2001" name="Nature">
        <title>The DNA sequence and comparative analysis of human chromosome 20.</title>
        <authorList>
            <person name="Deloukas P."/>
            <person name="Matthews L.H."/>
            <person name="Ashurst J.L."/>
            <person name="Burton J."/>
            <person name="Gilbert J.G.R."/>
            <person name="Jones M."/>
            <person name="Stavrides G."/>
            <person name="Almeida J.P."/>
            <person name="Babbage A.K."/>
            <person name="Bagguley C.L."/>
            <person name="Bailey J."/>
            <person name="Barlow K.F."/>
            <person name="Bates K.N."/>
            <person name="Beard L.M."/>
            <person name="Beare D.M."/>
            <person name="Beasley O.P."/>
            <person name="Bird C.P."/>
            <person name="Blakey S.E."/>
            <person name="Bridgeman A.M."/>
            <person name="Brown A.J."/>
            <person name="Buck D."/>
            <person name="Burrill W.D."/>
            <person name="Butler A.P."/>
            <person name="Carder C."/>
            <person name="Carter N.P."/>
            <person name="Chapman J.C."/>
            <person name="Clamp M."/>
            <person name="Clark G."/>
            <person name="Clark L.N."/>
            <person name="Clark S.Y."/>
            <person name="Clee C.M."/>
            <person name="Clegg S."/>
            <person name="Cobley V.E."/>
            <person name="Collier R.E."/>
            <person name="Connor R.E."/>
            <person name="Corby N.R."/>
            <person name="Coulson A."/>
            <person name="Coville G.J."/>
            <person name="Deadman R."/>
            <person name="Dhami P.D."/>
            <person name="Dunn M."/>
            <person name="Ellington A.G."/>
            <person name="Frankland J.A."/>
            <person name="Fraser A."/>
            <person name="French L."/>
            <person name="Garner P."/>
            <person name="Grafham D.V."/>
            <person name="Griffiths C."/>
            <person name="Griffiths M.N.D."/>
            <person name="Gwilliam R."/>
            <person name="Hall R.E."/>
            <person name="Hammond S."/>
            <person name="Harley J.L."/>
            <person name="Heath P.D."/>
            <person name="Ho S."/>
            <person name="Holden J.L."/>
            <person name="Howden P.J."/>
            <person name="Huckle E."/>
            <person name="Hunt A.R."/>
            <person name="Hunt S.E."/>
            <person name="Jekosch K."/>
            <person name="Johnson C.M."/>
            <person name="Johnson D."/>
            <person name="Kay M.P."/>
            <person name="Kimberley A.M."/>
            <person name="King A."/>
            <person name="Knights A."/>
            <person name="Laird G.K."/>
            <person name="Lawlor S."/>
            <person name="Lehvaeslaiho M.H."/>
            <person name="Leversha M.A."/>
            <person name="Lloyd C."/>
            <person name="Lloyd D.M."/>
            <person name="Lovell J.D."/>
            <person name="Marsh V.L."/>
            <person name="Martin S.L."/>
            <person name="McConnachie L.J."/>
            <person name="McLay K."/>
            <person name="McMurray A.A."/>
            <person name="Milne S.A."/>
            <person name="Mistry D."/>
            <person name="Moore M.J.F."/>
            <person name="Mullikin J.C."/>
            <person name="Nickerson T."/>
            <person name="Oliver K."/>
            <person name="Parker A."/>
            <person name="Patel R."/>
            <person name="Pearce T.A.V."/>
            <person name="Peck A.I."/>
            <person name="Phillimore B.J.C.T."/>
            <person name="Prathalingam S.R."/>
            <person name="Plumb R.W."/>
            <person name="Ramsay H."/>
            <person name="Rice C.M."/>
            <person name="Ross M.T."/>
            <person name="Scott C.E."/>
            <person name="Sehra H.K."/>
            <person name="Shownkeen R."/>
            <person name="Sims S."/>
            <person name="Skuce C.D."/>
            <person name="Smith M.L."/>
            <person name="Soderlund C."/>
            <person name="Steward C.A."/>
            <person name="Sulston J.E."/>
            <person name="Swann R.M."/>
            <person name="Sycamore N."/>
            <person name="Taylor R."/>
            <person name="Tee L."/>
            <person name="Thomas D.W."/>
            <person name="Thorpe A."/>
            <person name="Tracey A."/>
            <person name="Tromans A.C."/>
            <person name="Vaudin M."/>
            <person name="Wall M."/>
            <person name="Wallis J.M."/>
            <person name="Whitehead S.L."/>
            <person name="Whittaker P."/>
            <person name="Willey D.L."/>
            <person name="Williams L."/>
            <person name="Williams S.A."/>
            <person name="Wilming L."/>
            <person name="Wray P.W."/>
            <person name="Hubbard T."/>
            <person name="Durbin R.M."/>
            <person name="Bentley D.R."/>
            <person name="Beck S."/>
            <person name="Rogers J."/>
        </authorList>
    </citation>
    <scope>NUCLEOTIDE SEQUENCE [LARGE SCALE GENOMIC DNA]</scope>
</reference>
<reference key="4">
    <citation type="submission" date="2005-09" db="EMBL/GenBank/DDBJ databases">
        <authorList>
            <person name="Mural R.J."/>
            <person name="Istrail S."/>
            <person name="Sutton G.G."/>
            <person name="Florea L."/>
            <person name="Halpern A.L."/>
            <person name="Mobarry C.M."/>
            <person name="Lippert R."/>
            <person name="Walenz B."/>
            <person name="Shatkay H."/>
            <person name="Dew I."/>
            <person name="Miller J.R."/>
            <person name="Flanigan M.J."/>
            <person name="Edwards N.J."/>
            <person name="Bolanos R."/>
            <person name="Fasulo D."/>
            <person name="Halldorsson B.V."/>
            <person name="Hannenhalli S."/>
            <person name="Turner R."/>
            <person name="Yooseph S."/>
            <person name="Lu F."/>
            <person name="Nusskern D.R."/>
            <person name="Shue B.C."/>
            <person name="Zheng X.H."/>
            <person name="Zhong F."/>
            <person name="Delcher A.L."/>
            <person name="Huson D.H."/>
            <person name="Kravitz S.A."/>
            <person name="Mouchard L."/>
            <person name="Reinert K."/>
            <person name="Remington K.A."/>
            <person name="Clark A.G."/>
            <person name="Waterman M.S."/>
            <person name="Eichler E.E."/>
            <person name="Adams M.D."/>
            <person name="Hunkapiller M.W."/>
            <person name="Myers E.W."/>
            <person name="Venter J.C."/>
        </authorList>
    </citation>
    <scope>NUCLEOTIDE SEQUENCE [LARGE SCALE GENOMIC DNA]</scope>
</reference>
<reference key="5">
    <citation type="journal article" date="2004" name="Genome Res.">
        <title>The status, quality, and expansion of the NIH full-length cDNA project: the Mammalian Gene Collection (MGC).</title>
        <authorList>
            <consortium name="The MGC Project Team"/>
        </authorList>
    </citation>
    <scope>NUCLEOTIDE SEQUENCE [LARGE SCALE MRNA] (ISOFORM 1)</scope>
    <scope>VARIANT THR-303</scope>
    <source>
        <tissue>Brain</tissue>
        <tissue>Lymph</tissue>
        <tissue>Uterus</tissue>
    </source>
</reference>
<reference key="6">
    <citation type="journal article" date="2010" name="J. Biol. Chem.">
        <title>A novel type of E3 ligase for the Ufm1 conjugation system.</title>
        <authorList>
            <person name="Tatsumi K."/>
            <person name="Sou Y.S."/>
            <person name="Tada N."/>
            <person name="Nakamura E."/>
            <person name="Iemura S."/>
            <person name="Natsume T."/>
            <person name="Kang S.H."/>
            <person name="Chung C.H."/>
            <person name="Kasahara M."/>
            <person name="Kominami E."/>
            <person name="Yamamoto M."/>
            <person name="Tanaka K."/>
            <person name="Komatsu M."/>
        </authorList>
    </citation>
    <scope>UFMYLATION AT LYS-267</scope>
    <scope>SUBCELLULAR LOCATION</scope>
    <scope>TISSUE SPECIFICITY</scope>
    <scope>MUTAGENESIS OF LYS-116; LYS-121; LYS-124; LYS-128; LYS-193; LYS-224; LYS-227 AND LYS-267</scope>
</reference>
<reference key="7">
    <citation type="journal article" date="2010" name="J. Biol. Chem.">
        <title>A novel C53/LZAP-interacting protein regulates stability of C53/LZAP and DDRGK domain-containing Protein 1 (DDRGK1) and modulates NF-kappaB signaling.</title>
        <authorList>
            <person name="Wu J."/>
            <person name="Lei G."/>
            <person name="Mei M."/>
            <person name="Tang Y."/>
            <person name="Li H."/>
        </authorList>
    </citation>
    <scope>INTERACTION WITH CDK5RAP3</scope>
    <scope>REGION</scope>
    <scope>SUBCELLULAR LOCATION</scope>
    <scope>UBIQUITINATION</scope>
</reference>
<reference key="8">
    <citation type="journal article" date="2011" name="BMC Syst. Biol.">
        <title>Initial characterization of the human central proteome.</title>
        <authorList>
            <person name="Burkard T.R."/>
            <person name="Planyavsky M."/>
            <person name="Kaupe I."/>
            <person name="Breitwieser F.P."/>
            <person name="Buerckstuemmer T."/>
            <person name="Bennett K.L."/>
            <person name="Superti-Furga G."/>
            <person name="Colinge J."/>
        </authorList>
    </citation>
    <scope>IDENTIFICATION BY MASS SPECTROMETRY [LARGE SCALE ANALYSIS]</scope>
</reference>
<reference key="9">
    <citation type="journal article" date="2013" name="J. Proteome Res.">
        <title>Toward a comprehensive characterization of a human cancer cell phosphoproteome.</title>
        <authorList>
            <person name="Zhou H."/>
            <person name="Di Palma S."/>
            <person name="Preisinger C."/>
            <person name="Peng M."/>
            <person name="Polat A.N."/>
            <person name="Heck A.J."/>
            <person name="Mohammed S."/>
        </authorList>
    </citation>
    <scope>PHOSPHORYLATION [LARGE SCALE ANALYSIS] AT SER-72</scope>
    <scope>IDENTIFICATION BY MASS SPECTROMETRY [LARGE SCALE ANALYSIS]</scope>
    <source>
        <tissue>Erythroleukemia</tissue>
    </source>
</reference>
<reference key="10">
    <citation type="journal article" date="2013" name="PLoS ONE">
        <title>DDRGK1 regulates NF-kappaB activity by modulating IkappaBalpha stability.</title>
        <authorList>
            <person name="Xi P."/>
            <person name="Ding D."/>
            <person name="Zhou J."/>
            <person name="Wang M."/>
            <person name="Cong Y.S."/>
        </authorList>
    </citation>
    <scope>FUNCTION</scope>
    <scope>INTERACTION WITH NFKBIA</scope>
</reference>
<reference key="11">
    <citation type="journal article" date="2014" name="J. Proteomics">
        <title>An enzyme assisted RP-RPLC approach for in-depth analysis of human liver phosphoproteome.</title>
        <authorList>
            <person name="Bian Y."/>
            <person name="Song C."/>
            <person name="Cheng K."/>
            <person name="Dong M."/>
            <person name="Wang F."/>
            <person name="Huang J."/>
            <person name="Sun D."/>
            <person name="Wang L."/>
            <person name="Ye M."/>
            <person name="Zou H."/>
        </authorList>
    </citation>
    <scope>PHOSPHORYLATION [LARGE SCALE ANALYSIS] AT SER-114</scope>
    <scope>IDENTIFICATION BY MASS SPECTROMETRY [LARGE SCALE ANALYSIS]</scope>
    <source>
        <tissue>Liver</tissue>
    </source>
</reference>
<reference key="12">
    <citation type="journal article" date="2014" name="Mol. Cell">
        <title>Modification of ASC1 by UFM1 is crucial for ERalpha transactivation and breast cancer development.</title>
        <authorList>
            <person name="Yoo H.M."/>
            <person name="Kang S.H."/>
            <person name="Kim J.Y."/>
            <person name="Lee J.E."/>
            <person name="Seong M.W."/>
            <person name="Lee S.W."/>
            <person name="Ka S.H."/>
            <person name="Sou Y.S."/>
            <person name="Komatsu M."/>
            <person name="Tanaka K."/>
            <person name="Lee S.T."/>
            <person name="Noh D.Y."/>
            <person name="Baek S.H."/>
            <person name="Jeon Y.J."/>
            <person name="Chung C.H."/>
        </authorList>
    </citation>
    <scope>FUNCTION</scope>
    <scope>INTERACTION WITH UFL1</scope>
    <scope>REGION</scope>
    <scope>MUTAGENESIS OF LYS-267</scope>
</reference>
<reference key="13">
    <citation type="journal article" date="2015" name="Proteomics">
        <title>N-terminome analysis of the human mitochondrial proteome.</title>
        <authorList>
            <person name="Vaca Jacome A.S."/>
            <person name="Rabilloud T."/>
            <person name="Schaeffer-Reiss C."/>
            <person name="Rompais M."/>
            <person name="Ayoub D."/>
            <person name="Lane L."/>
            <person name="Bairoch A."/>
            <person name="Van Dorsselaer A."/>
            <person name="Carapito C."/>
        </authorList>
    </citation>
    <scope>IDENTIFICATION BY MASS SPECTROMETRY [LARGE SCALE ANALYSIS]</scope>
</reference>
<reference key="14">
    <citation type="journal article" date="2017" name="J. Clin. Invest.">
        <title>Loss of DDRGK1 modulates SOX9 ubiquitination in spondyloepimetaphyseal dysplasia.</title>
        <authorList>
            <person name="Egunsola A.T."/>
            <person name="Bae Y."/>
            <person name="Jiang M.M."/>
            <person name="Liu D.S."/>
            <person name="Chen-Evenson Y."/>
            <person name="Bertin T."/>
            <person name="Chen S."/>
            <person name="Lu J.T."/>
            <person name="Nevarez L."/>
            <person name="Magal N."/>
            <person name="Raas-Rothschild A."/>
            <person name="Swindell E.C."/>
            <person name="Cohn D.H."/>
            <person name="Gibbs R.A."/>
            <person name="Campeau P.M."/>
            <person name="Shohat M."/>
            <person name="Lee B.H."/>
        </authorList>
    </citation>
    <scope>INVOLVEMENT IN SEMDSH</scope>
    <scope>FUNCTION</scope>
    <scope>INTERACTION WITH SOX9</scope>
</reference>
<reference key="15">
    <citation type="journal article" date="2017" name="FEBS Lett.">
        <title>A novel approach to assess the ubiquitin-fold modifier 1-system in cells.</title>
        <authorList>
            <person name="Ishimura R."/>
            <person name="Obata M."/>
            <person name="Kageyama S."/>
            <person name="Daniel J."/>
            <person name="Tanaka K."/>
            <person name="Komatsu M."/>
        </authorList>
    </citation>
    <scope>UFMYLATION AT LYS-267</scope>
    <scope>MUTAGENESIS OF LYS-267</scope>
</reference>
<reference key="16">
    <citation type="journal article" date="2017" name="Nat. Commun.">
        <title>A critical role of DDRGK1 in endoplasmic reticulum homoeostasis via regulation of IRE1alpha stability.</title>
        <authorList>
            <person name="Liu J."/>
            <person name="Wang Y."/>
            <person name="Song L."/>
            <person name="Zeng L."/>
            <person name="Yi W."/>
            <person name="Liu T."/>
            <person name="Chen H."/>
            <person name="Wang M."/>
            <person name="Ju Z."/>
            <person name="Cong Y.S."/>
        </authorList>
    </citation>
    <scope>FUNCTION</scope>
    <scope>INTERACTION WITH ERN1</scope>
    <scope>UFMYLATION AT LYS-267</scope>
    <scope>MUTAGENESIS OF LYS-267</scope>
</reference>
<reference key="17">
    <citation type="journal article" date="2019" name="Proc. Natl. Acad. Sci. U.S.A.">
        <title>Ribosomal protein RPL26 is the principal target of UFMylation.</title>
        <authorList>
            <person name="Walczak C.P."/>
            <person name="Leto D.E."/>
            <person name="Zhang L."/>
            <person name="Riepe C."/>
            <person name="Muller R.Y."/>
            <person name="DaRosa P.A."/>
            <person name="Ingolia N.T."/>
            <person name="Elias J.E."/>
            <person name="Kopito R.R."/>
        </authorList>
    </citation>
    <scope>FUNCTION</scope>
</reference>
<reference key="18">
    <citation type="journal article" date="2020" name="Cell">
        <title>A genome-wide ER-phagy screen highlights key roles of mitochondrial metabolism and ER-Resident UFMylation.</title>
        <authorList>
            <person name="Liang J.R."/>
            <person name="Lingeman E."/>
            <person name="Luong T."/>
            <person name="Ahmed S."/>
            <person name="Muhar M."/>
            <person name="Nguyen T."/>
            <person name="Olzmann J.A."/>
            <person name="Corn J.E."/>
        </authorList>
    </citation>
    <scope>FUNCTION</scope>
    <scope>SUBCELLULAR LOCATION</scope>
    <scope>INTERACTION WITH UFL1</scope>
    <scope>MUTAGENESIS OF 116-LYS--LYS-128; LYS-146; LYS-176; LYS-193; 224-LYS--LYS-227 AND LYS-267</scope>
</reference>
<reference key="19">
    <citation type="journal article" date="2022" name="EMBO J.">
        <title>A non-canonical scaffold-type E3 ligase complex mediates protein UFMylation.</title>
        <authorList>
            <person name="Peter J.J."/>
            <person name="Magnussen H.M."/>
            <person name="DaRosa P.A."/>
            <person name="Millrine D."/>
            <person name="Matthews S.P."/>
            <person name="Lamoliatte F."/>
            <person name="Sundaramoorthy R."/>
            <person name="Kopito R.R."/>
            <person name="Kulathu Y."/>
        </authorList>
    </citation>
    <scope>FUNCTION</scope>
    <scope>SUBCELLULAR LOCATION</scope>
    <scope>IDENTIFICATION IN THE UREL COMPLEX</scope>
</reference>
<reference key="20">
    <citation type="journal article" date="2022" name="Free Radic. Biol. Med.">
        <title>P4HB UFMylation regulates mitochondrial function and oxidative stress.</title>
        <authorList>
            <person name="Zhu J."/>
            <person name="Ma X."/>
            <person name="Jing Y."/>
            <person name="Zhang G."/>
            <person name="Zhang D."/>
            <person name="Mao Z."/>
            <person name="Ma X."/>
            <person name="Liu H."/>
            <person name="Chen F."/>
        </authorList>
    </citation>
    <scope>FUNCTION</scope>
</reference>
<reference key="21">
    <citation type="journal article" date="2022" name="Nat. Commun.">
        <title>The UFM1 system regulates ER-phagy through the ufmylation of CYB5R3.</title>
        <authorList>
            <person name="Ishimura R."/>
            <person name="El-Gowily A.H."/>
            <person name="Noshiro D."/>
            <person name="Komatsu-Hirota S."/>
            <person name="Ono Y."/>
            <person name="Shindo M."/>
            <person name="Hatta T."/>
            <person name="Abe M."/>
            <person name="Uemura T."/>
            <person name="Lee-Okada H.C."/>
            <person name="Mohamed T.M."/>
            <person name="Yokomizo T."/>
            <person name="Ueno T."/>
            <person name="Sakimura K."/>
            <person name="Natsume T."/>
            <person name="Sorimachi H."/>
            <person name="Inada T."/>
            <person name="Waguri S."/>
            <person name="Noda N.N."/>
            <person name="Komatsu M."/>
        </authorList>
    </citation>
    <scope>FUNCTION</scope>
    <scope>SUBCELLULAR LOCATION</scope>
    <scope>IDENTIFICATION IN THE UREL COMPLEX</scope>
    <scope>DOMAIN</scope>
    <scope>MUTAGENESIS OF 196-PHE--VAL-198 AND LYS-267</scope>
</reference>
<reference key="22">
    <citation type="journal article" date="2023" name="FASEB J.">
        <title>UFMylation of HRD1 regulates endoplasmic reticulum homeostasis.</title>
        <authorList>
            <person name="Luo H."/>
            <person name="Jiao Q.B."/>
            <person name="Shen C.B."/>
            <person name="Gong W.Y."/>
            <person name="Yuan J.H."/>
            <person name="Liu Y.Y."/>
            <person name="Chen Z."/>
            <person name="Liu J."/>
            <person name="Xu X.L."/>
            <person name="Cong Y.S."/>
            <person name="Zhang X.W."/>
        </authorList>
    </citation>
    <scope>FUNCTION</scope>
</reference>
<reference key="23">
    <citation type="journal article" date="2023" name="Sci. Adv.">
        <title>Mechanistic insights into the roles of the UFM1 E3 ligase complex in ufmylation and ribosome-associated protein quality control.</title>
        <authorList>
            <person name="Ishimura R."/>
            <person name="Ito S."/>
            <person name="Mao G."/>
            <person name="Komatsu-Hirota S."/>
            <person name="Inada T."/>
            <person name="Noda N.N."/>
            <person name="Komatsu M."/>
        </authorList>
    </citation>
    <scope>FUNCTION</scope>
    <scope>IDENTIFICATION IN THE UREL COMPLEX</scope>
    <scope>DOMAIN</scope>
    <scope>MUTAGENESIS OF 196-PHE--VAL-198; 271-ILE--LEU-276 AND 302-ILE--TRP-304</scope>
</reference>
<reference evidence="30" key="24">
    <citation type="journal article" date="2023" name="EMBO Rep.">
        <title>Structural study of UFL1-UFC1 interaction uncovers the role of UFL1 N-terminal helix in ufmylation.</title>
        <authorList>
            <person name="Banerjee S."/>
            <person name="Varga J.K."/>
            <person name="Kumar M."/>
            <person name="Zoltsman G."/>
            <person name="Rotem-Bamberger S."/>
            <person name="Cohen-Kfir E."/>
            <person name="Isupov M.N."/>
            <person name="Rosenzweig R."/>
            <person name="Schueler-Furman O."/>
            <person name="Wiener R."/>
        </authorList>
    </citation>
    <scope>X-RAY CRYSTALLOGRAPHY (3.07 ANGSTROMS) OF 207-305 IN COMPLEX WITH UFL1</scope>
</reference>
<reference evidence="31" key="25">
    <citation type="journal article" date="2024" name="Nature">
        <title>The UFM1 E3 ligase recognizes and releases 60S ribosomes from ER translocons.</title>
        <authorList>
            <person name="Makhlouf L."/>
            <person name="Peter J.J."/>
            <person name="Magnussen H.M."/>
            <person name="Thakur R."/>
            <person name="Millrine D."/>
            <person name="Minshull T.C."/>
            <person name="Harrison G."/>
            <person name="Varghese J."/>
            <person name="Lamoliatte F."/>
            <person name="Foglizzo M."/>
            <person name="Macartney T."/>
            <person name="Calabrese A.N."/>
            <person name="Zeqiraj E."/>
            <person name="Kulathu Y."/>
        </authorList>
    </citation>
    <scope>X-RAY CRYSTALLOGRAPHY (2.56 ANGSTROMS) OF 205-314 IN COMPLEX WITH UFL1 AND UFC1</scope>
    <scope>FUNCTION</scope>
    <scope>SUBCELLULAR LOCATION</scope>
    <scope>IDENTIFICATION IN THE UREL COMPLEX</scope>
    <scope>DOMAIN</scope>
    <scope>MUTAGENESIS OF ARG-265</scope>
</reference>
<reference evidence="32 33 34" key="26">
    <citation type="journal article" date="2024" name="Nature">
        <title>UFM1 E3 ligase promotes recycling of 60S ribosomal subunits from the ER.</title>
        <authorList>
            <person name="DaRosa P.A."/>
            <person name="Penchev I."/>
            <person name="Gumbin S.C."/>
            <person name="Scavone F."/>
            <person name="Wachalska M."/>
            <person name="Paulo J.A."/>
            <person name="Ordureau A."/>
            <person name="Peter J.J."/>
            <person name="Kulathu Y."/>
            <person name="Harper J.W."/>
            <person name="Becker T."/>
            <person name="Beckmann R."/>
            <person name="Kopito R.R."/>
        </authorList>
    </citation>
    <scope>STRUCTURE BY ELECTRON MICROSCOPY (2.9 ANGSTROMS) OF THE UREL COMPLEX IN COMPLEX WITH THE 60S RIBOSOME</scope>
    <scope>FUNCTION</scope>
    <scope>SUBCELLULAR LOCATION</scope>
    <scope>IDENTIFICATION IN THE UREL COMPLEX</scope>
    <scope>DOMAIN</scope>
    <scope>MUTAGENESIS OF 196-PHE--GLU-201</scope>
</reference>